<sequence length="261" mass="27807">MLEALLLGVVEGLTEFLPISSTAHLMLIGDMLGFEGPPGKTYEIVVQLGAILAVCVVFRQRLWGVATTITQPRSFAFARNVMVAFLPAAVIGATLYKYIKQMLESPLVAAIALVVGGVAILVIERLVKRARIHDIEDMSPALALGVGFCQVLAMVPGVSRAGATIMGSMLLGLDRRAAAEFSFFLAIPTMCGASAYSLYKNWATLSFDGAGLIALGFVAAFLSALVVVKGFIGFVGRHGFAPFAWYRIAFGSLMAVLILMR</sequence>
<proteinExistence type="inferred from homology"/>
<dbReference type="EC" id="3.6.1.27" evidence="1"/>
<dbReference type="EMBL" id="AP007255">
    <property type="protein sequence ID" value="BAE50351.1"/>
    <property type="molecule type" value="Genomic_DNA"/>
</dbReference>
<dbReference type="RefSeq" id="WP_011383957.1">
    <property type="nucleotide sequence ID" value="NC_007626.1"/>
</dbReference>
<dbReference type="SMR" id="Q2W724"/>
<dbReference type="STRING" id="342108.amb1547"/>
<dbReference type="KEGG" id="mag:amb1547"/>
<dbReference type="HOGENOM" id="CLU_060296_2_0_5"/>
<dbReference type="OrthoDB" id="9808289at2"/>
<dbReference type="Proteomes" id="UP000007058">
    <property type="component" value="Chromosome"/>
</dbReference>
<dbReference type="GO" id="GO:0005886">
    <property type="term" value="C:plasma membrane"/>
    <property type="evidence" value="ECO:0007669"/>
    <property type="project" value="UniProtKB-SubCell"/>
</dbReference>
<dbReference type="GO" id="GO:0050380">
    <property type="term" value="F:undecaprenyl-diphosphatase activity"/>
    <property type="evidence" value="ECO:0007669"/>
    <property type="project" value="UniProtKB-UniRule"/>
</dbReference>
<dbReference type="GO" id="GO:0071555">
    <property type="term" value="P:cell wall organization"/>
    <property type="evidence" value="ECO:0007669"/>
    <property type="project" value="UniProtKB-KW"/>
</dbReference>
<dbReference type="GO" id="GO:0009252">
    <property type="term" value="P:peptidoglycan biosynthetic process"/>
    <property type="evidence" value="ECO:0007669"/>
    <property type="project" value="UniProtKB-KW"/>
</dbReference>
<dbReference type="GO" id="GO:0008360">
    <property type="term" value="P:regulation of cell shape"/>
    <property type="evidence" value="ECO:0007669"/>
    <property type="project" value="UniProtKB-KW"/>
</dbReference>
<dbReference type="GO" id="GO:0046677">
    <property type="term" value="P:response to antibiotic"/>
    <property type="evidence" value="ECO:0007669"/>
    <property type="project" value="UniProtKB-UniRule"/>
</dbReference>
<dbReference type="HAMAP" id="MF_01006">
    <property type="entry name" value="Undec_diphosphatase"/>
    <property type="match status" value="1"/>
</dbReference>
<dbReference type="InterPro" id="IPR003824">
    <property type="entry name" value="UppP"/>
</dbReference>
<dbReference type="NCBIfam" id="NF001389">
    <property type="entry name" value="PRK00281.1-2"/>
    <property type="match status" value="1"/>
</dbReference>
<dbReference type="NCBIfam" id="NF001390">
    <property type="entry name" value="PRK00281.1-4"/>
    <property type="match status" value="1"/>
</dbReference>
<dbReference type="NCBIfam" id="TIGR00753">
    <property type="entry name" value="undec_PP_bacA"/>
    <property type="match status" value="1"/>
</dbReference>
<dbReference type="PANTHER" id="PTHR30622">
    <property type="entry name" value="UNDECAPRENYL-DIPHOSPHATASE"/>
    <property type="match status" value="1"/>
</dbReference>
<dbReference type="PANTHER" id="PTHR30622:SF3">
    <property type="entry name" value="UNDECAPRENYL-DIPHOSPHATASE"/>
    <property type="match status" value="1"/>
</dbReference>
<dbReference type="Pfam" id="PF02673">
    <property type="entry name" value="BacA"/>
    <property type="match status" value="1"/>
</dbReference>
<keyword id="KW-0046">Antibiotic resistance</keyword>
<keyword id="KW-0997">Cell inner membrane</keyword>
<keyword id="KW-1003">Cell membrane</keyword>
<keyword id="KW-0133">Cell shape</keyword>
<keyword id="KW-0961">Cell wall biogenesis/degradation</keyword>
<keyword id="KW-0378">Hydrolase</keyword>
<keyword id="KW-0472">Membrane</keyword>
<keyword id="KW-0573">Peptidoglycan synthesis</keyword>
<keyword id="KW-0812">Transmembrane</keyword>
<keyword id="KW-1133">Transmembrane helix</keyword>
<accession>Q2W724</accession>
<name>UPPP2_PARM1</name>
<feature type="chain" id="PRO_0000250243" description="Undecaprenyl-diphosphatase 2">
    <location>
        <begin position="1"/>
        <end position="261"/>
    </location>
</feature>
<feature type="transmembrane region" description="Helical" evidence="1">
    <location>
        <begin position="1"/>
        <end position="21"/>
    </location>
</feature>
<feature type="transmembrane region" description="Helical" evidence="1">
    <location>
        <begin position="38"/>
        <end position="58"/>
    </location>
</feature>
<feature type="transmembrane region" description="Helical" evidence="1">
    <location>
        <begin position="75"/>
        <end position="95"/>
    </location>
</feature>
<feature type="transmembrane region" description="Helical" evidence="1">
    <location>
        <begin position="103"/>
        <end position="123"/>
    </location>
</feature>
<feature type="transmembrane region" description="Helical" evidence="1">
    <location>
        <begin position="138"/>
        <end position="158"/>
    </location>
</feature>
<feature type="transmembrane region" description="Helical" evidence="1">
    <location>
        <begin position="178"/>
        <end position="198"/>
    </location>
</feature>
<feature type="transmembrane region" description="Helical" evidence="1">
    <location>
        <begin position="212"/>
        <end position="232"/>
    </location>
</feature>
<feature type="transmembrane region" description="Helical" evidence="1">
    <location>
        <begin position="240"/>
        <end position="260"/>
    </location>
</feature>
<comment type="function">
    <text evidence="1">Catalyzes the dephosphorylation of undecaprenyl diphosphate (UPP). Confers resistance to bacitracin.</text>
</comment>
<comment type="catalytic activity">
    <reaction evidence="1">
        <text>di-trans,octa-cis-undecaprenyl diphosphate + H2O = di-trans,octa-cis-undecaprenyl phosphate + phosphate + H(+)</text>
        <dbReference type="Rhea" id="RHEA:28094"/>
        <dbReference type="ChEBI" id="CHEBI:15377"/>
        <dbReference type="ChEBI" id="CHEBI:15378"/>
        <dbReference type="ChEBI" id="CHEBI:43474"/>
        <dbReference type="ChEBI" id="CHEBI:58405"/>
        <dbReference type="ChEBI" id="CHEBI:60392"/>
        <dbReference type="EC" id="3.6.1.27"/>
    </reaction>
</comment>
<comment type="subcellular location">
    <subcellularLocation>
        <location evidence="1">Cell inner membrane</location>
        <topology evidence="1">Multi-pass membrane protein</topology>
    </subcellularLocation>
</comment>
<comment type="miscellaneous">
    <text>Bacitracin is thought to be involved in the inhibition of peptidoglycan synthesis by sequestering undecaprenyl diphosphate, thereby reducing the pool of lipid carrier available.</text>
</comment>
<comment type="similarity">
    <text evidence="1">Belongs to the UppP family.</text>
</comment>
<reference key="1">
    <citation type="journal article" date="2005" name="DNA Res.">
        <title>Complete genome sequence of the facultative anaerobic magnetotactic bacterium Magnetospirillum sp. strain AMB-1.</title>
        <authorList>
            <person name="Matsunaga T."/>
            <person name="Okamura Y."/>
            <person name="Fukuda Y."/>
            <person name="Wahyudi A.T."/>
            <person name="Murase Y."/>
            <person name="Takeyama H."/>
        </authorList>
    </citation>
    <scope>NUCLEOTIDE SEQUENCE [LARGE SCALE GENOMIC DNA]</scope>
    <source>
        <strain>ATCC 700264 / AMB-1</strain>
    </source>
</reference>
<protein>
    <recommendedName>
        <fullName evidence="1">Undecaprenyl-diphosphatase 2</fullName>
        <ecNumber evidence="1">3.6.1.27</ecNumber>
    </recommendedName>
    <alternativeName>
        <fullName evidence="1">Bacitracin resistance protein 2</fullName>
    </alternativeName>
    <alternativeName>
        <fullName evidence="1">Undecaprenyl pyrophosphate phosphatase 2</fullName>
    </alternativeName>
</protein>
<gene>
    <name evidence="1" type="primary">uppP2</name>
    <name type="ordered locus">amb1547</name>
</gene>
<evidence type="ECO:0000255" key="1">
    <source>
        <dbReference type="HAMAP-Rule" id="MF_01006"/>
    </source>
</evidence>
<organism>
    <name type="scientific">Paramagnetospirillum magneticum (strain ATCC 700264 / AMB-1)</name>
    <name type="common">Magnetospirillum magneticum</name>
    <dbReference type="NCBI Taxonomy" id="342108"/>
    <lineage>
        <taxon>Bacteria</taxon>
        <taxon>Pseudomonadati</taxon>
        <taxon>Pseudomonadota</taxon>
        <taxon>Alphaproteobacteria</taxon>
        <taxon>Rhodospirillales</taxon>
        <taxon>Magnetospirillaceae</taxon>
        <taxon>Paramagnetospirillum</taxon>
    </lineage>
</organism>